<organism>
    <name type="scientific">Xanthobacter autotrophicus (strain ATCC BAA-1158 / Py2)</name>
    <dbReference type="NCBI Taxonomy" id="78245"/>
    <lineage>
        <taxon>Bacteria</taxon>
        <taxon>Pseudomonadati</taxon>
        <taxon>Pseudomonadota</taxon>
        <taxon>Alphaproteobacteria</taxon>
        <taxon>Hyphomicrobiales</taxon>
        <taxon>Xanthobacteraceae</taxon>
        <taxon>Xanthobacter</taxon>
    </lineage>
</organism>
<protein>
    <recommendedName>
        <fullName evidence="1">Pyridoxine 5'-phosphate synthase</fullName>
        <shortName evidence="1">PNP synthase</shortName>
        <ecNumber evidence="1">2.6.99.2</ecNumber>
    </recommendedName>
</protein>
<feature type="chain" id="PRO_1000114832" description="Pyridoxine 5'-phosphate synthase">
    <location>
        <begin position="1"/>
        <end position="257"/>
    </location>
</feature>
<feature type="active site" description="Proton acceptor" evidence="1">
    <location>
        <position position="48"/>
    </location>
</feature>
<feature type="active site" description="Proton acceptor" evidence="1">
    <location>
        <position position="75"/>
    </location>
</feature>
<feature type="active site" description="Proton donor" evidence="1">
    <location>
        <position position="199"/>
    </location>
</feature>
<feature type="binding site" evidence="1">
    <location>
        <position position="12"/>
    </location>
    <ligand>
        <name>3-amino-2-oxopropyl phosphate</name>
        <dbReference type="ChEBI" id="CHEBI:57279"/>
    </ligand>
</feature>
<feature type="binding site" evidence="1">
    <location>
        <begin position="14"/>
        <end position="15"/>
    </location>
    <ligand>
        <name>1-deoxy-D-xylulose 5-phosphate</name>
        <dbReference type="ChEBI" id="CHEBI:57792"/>
    </ligand>
</feature>
<feature type="binding site" evidence="1">
    <location>
        <position position="23"/>
    </location>
    <ligand>
        <name>3-amino-2-oxopropyl phosphate</name>
        <dbReference type="ChEBI" id="CHEBI:57279"/>
    </ligand>
</feature>
<feature type="binding site" evidence="1">
    <location>
        <position position="50"/>
    </location>
    <ligand>
        <name>1-deoxy-D-xylulose 5-phosphate</name>
        <dbReference type="ChEBI" id="CHEBI:57792"/>
    </ligand>
</feature>
<feature type="binding site" evidence="1">
    <location>
        <position position="55"/>
    </location>
    <ligand>
        <name>1-deoxy-D-xylulose 5-phosphate</name>
        <dbReference type="ChEBI" id="CHEBI:57792"/>
    </ligand>
</feature>
<feature type="binding site" evidence="1">
    <location>
        <position position="105"/>
    </location>
    <ligand>
        <name>1-deoxy-D-xylulose 5-phosphate</name>
        <dbReference type="ChEBI" id="CHEBI:57792"/>
    </ligand>
</feature>
<feature type="binding site" evidence="1">
    <location>
        <position position="200"/>
    </location>
    <ligand>
        <name>3-amino-2-oxopropyl phosphate</name>
        <dbReference type="ChEBI" id="CHEBI:57279"/>
    </ligand>
</feature>
<feature type="binding site" evidence="1">
    <location>
        <begin position="221"/>
        <end position="222"/>
    </location>
    <ligand>
        <name>3-amino-2-oxopropyl phosphate</name>
        <dbReference type="ChEBI" id="CHEBI:57279"/>
    </ligand>
</feature>
<feature type="site" description="Transition state stabilizer" evidence="1">
    <location>
        <position position="156"/>
    </location>
</feature>
<sequence length="257" mass="26963">MAVLKPVRLGVNVDHVATVRNARGGALPDPVRAAALAKAAGAHGITAHLREDRRHIRDADMERLKAEIDLPLNFEMAATDEMVAIACRVRPNACCLVPERREERTTEGGLDAAGQRAELAPRIARLKAAGIRVSLFIAADPAQIAAAAELGADIVELHTGAWCDAVTEGRHVEAEAEFVRLKAGARQAAGLGLEVHAGHGLDYATAERIAAFPQIVELNIGHFLIGEAIFVGLDQAIARMRAAIAAGRAAVGDGAAA</sequence>
<proteinExistence type="inferred from homology"/>
<name>PDXJ_XANP2</name>
<keyword id="KW-0963">Cytoplasm</keyword>
<keyword id="KW-0664">Pyridoxine biosynthesis</keyword>
<keyword id="KW-1185">Reference proteome</keyword>
<keyword id="KW-0808">Transferase</keyword>
<evidence type="ECO:0000255" key="1">
    <source>
        <dbReference type="HAMAP-Rule" id="MF_00279"/>
    </source>
</evidence>
<accession>A7IM59</accession>
<gene>
    <name evidence="1" type="primary">pdxJ</name>
    <name type="ordered locus">Xaut_3878</name>
</gene>
<dbReference type="EC" id="2.6.99.2" evidence="1"/>
<dbReference type="EMBL" id="CP000781">
    <property type="protein sequence ID" value="ABS69102.1"/>
    <property type="molecule type" value="Genomic_DNA"/>
</dbReference>
<dbReference type="SMR" id="A7IM59"/>
<dbReference type="STRING" id="78245.Xaut_3878"/>
<dbReference type="KEGG" id="xau:Xaut_3878"/>
<dbReference type="eggNOG" id="COG0854">
    <property type="taxonomic scope" value="Bacteria"/>
</dbReference>
<dbReference type="HOGENOM" id="CLU_074563_0_0_5"/>
<dbReference type="OrthoDB" id="9806590at2"/>
<dbReference type="PhylomeDB" id="A7IM59"/>
<dbReference type="UniPathway" id="UPA00244">
    <property type="reaction ID" value="UER00313"/>
</dbReference>
<dbReference type="Proteomes" id="UP000002417">
    <property type="component" value="Chromosome"/>
</dbReference>
<dbReference type="GO" id="GO:0005829">
    <property type="term" value="C:cytosol"/>
    <property type="evidence" value="ECO:0007669"/>
    <property type="project" value="TreeGrafter"/>
</dbReference>
<dbReference type="GO" id="GO:0033856">
    <property type="term" value="F:pyridoxine 5'-phosphate synthase activity"/>
    <property type="evidence" value="ECO:0007669"/>
    <property type="project" value="UniProtKB-EC"/>
</dbReference>
<dbReference type="GO" id="GO:0008615">
    <property type="term" value="P:pyridoxine biosynthetic process"/>
    <property type="evidence" value="ECO:0007669"/>
    <property type="project" value="UniProtKB-UniRule"/>
</dbReference>
<dbReference type="CDD" id="cd00003">
    <property type="entry name" value="PNPsynthase"/>
    <property type="match status" value="1"/>
</dbReference>
<dbReference type="Gene3D" id="3.20.20.70">
    <property type="entry name" value="Aldolase class I"/>
    <property type="match status" value="1"/>
</dbReference>
<dbReference type="HAMAP" id="MF_00279">
    <property type="entry name" value="PdxJ"/>
    <property type="match status" value="1"/>
</dbReference>
<dbReference type="InterPro" id="IPR013785">
    <property type="entry name" value="Aldolase_TIM"/>
</dbReference>
<dbReference type="InterPro" id="IPR004569">
    <property type="entry name" value="PyrdxlP_synth_PdxJ"/>
</dbReference>
<dbReference type="InterPro" id="IPR036130">
    <property type="entry name" value="Pyridoxine-5'_phos_synth"/>
</dbReference>
<dbReference type="NCBIfam" id="TIGR00559">
    <property type="entry name" value="pdxJ"/>
    <property type="match status" value="1"/>
</dbReference>
<dbReference type="NCBIfam" id="NF003624">
    <property type="entry name" value="PRK05265.1-2"/>
    <property type="match status" value="1"/>
</dbReference>
<dbReference type="NCBIfam" id="NF003625">
    <property type="entry name" value="PRK05265.1-3"/>
    <property type="match status" value="1"/>
</dbReference>
<dbReference type="NCBIfam" id="NF003627">
    <property type="entry name" value="PRK05265.1-5"/>
    <property type="match status" value="1"/>
</dbReference>
<dbReference type="PANTHER" id="PTHR30456">
    <property type="entry name" value="PYRIDOXINE 5'-PHOSPHATE SYNTHASE"/>
    <property type="match status" value="1"/>
</dbReference>
<dbReference type="PANTHER" id="PTHR30456:SF0">
    <property type="entry name" value="PYRIDOXINE 5'-PHOSPHATE SYNTHASE"/>
    <property type="match status" value="1"/>
</dbReference>
<dbReference type="Pfam" id="PF03740">
    <property type="entry name" value="PdxJ"/>
    <property type="match status" value="1"/>
</dbReference>
<dbReference type="SUPFAM" id="SSF63892">
    <property type="entry name" value="Pyridoxine 5'-phosphate synthase"/>
    <property type="match status" value="1"/>
</dbReference>
<reference key="1">
    <citation type="submission" date="2007-07" db="EMBL/GenBank/DDBJ databases">
        <title>Complete sequence of chromosome of Xanthobacter autotrophicus Py2.</title>
        <authorList>
            <consortium name="US DOE Joint Genome Institute"/>
            <person name="Copeland A."/>
            <person name="Lucas S."/>
            <person name="Lapidus A."/>
            <person name="Barry K."/>
            <person name="Glavina del Rio T."/>
            <person name="Hammon N."/>
            <person name="Israni S."/>
            <person name="Dalin E."/>
            <person name="Tice H."/>
            <person name="Pitluck S."/>
            <person name="Sims D."/>
            <person name="Brettin T."/>
            <person name="Bruce D."/>
            <person name="Detter J.C."/>
            <person name="Han C."/>
            <person name="Tapia R."/>
            <person name="Brainard J."/>
            <person name="Schmutz J."/>
            <person name="Larimer F."/>
            <person name="Land M."/>
            <person name="Hauser L."/>
            <person name="Kyrpides N."/>
            <person name="Kim E."/>
            <person name="Ensigns S.A."/>
            <person name="Richardson P."/>
        </authorList>
    </citation>
    <scope>NUCLEOTIDE SEQUENCE [LARGE SCALE GENOMIC DNA]</scope>
    <source>
        <strain>ATCC BAA-1158 / Py2</strain>
    </source>
</reference>
<comment type="function">
    <text evidence="1">Catalyzes the complicated ring closure reaction between the two acyclic compounds 1-deoxy-D-xylulose-5-phosphate (DXP) and 3-amino-2-oxopropyl phosphate (1-amino-acetone-3-phosphate or AAP) to form pyridoxine 5'-phosphate (PNP) and inorganic phosphate.</text>
</comment>
<comment type="catalytic activity">
    <reaction evidence="1">
        <text>3-amino-2-oxopropyl phosphate + 1-deoxy-D-xylulose 5-phosphate = pyridoxine 5'-phosphate + phosphate + 2 H2O + H(+)</text>
        <dbReference type="Rhea" id="RHEA:15265"/>
        <dbReference type="ChEBI" id="CHEBI:15377"/>
        <dbReference type="ChEBI" id="CHEBI:15378"/>
        <dbReference type="ChEBI" id="CHEBI:43474"/>
        <dbReference type="ChEBI" id="CHEBI:57279"/>
        <dbReference type="ChEBI" id="CHEBI:57792"/>
        <dbReference type="ChEBI" id="CHEBI:58589"/>
        <dbReference type="EC" id="2.6.99.2"/>
    </reaction>
</comment>
<comment type="pathway">
    <text evidence="1">Cofactor biosynthesis; pyridoxine 5'-phosphate biosynthesis; pyridoxine 5'-phosphate from D-erythrose 4-phosphate: step 5/5.</text>
</comment>
<comment type="subunit">
    <text evidence="1">Homooctamer; tetramer of dimers.</text>
</comment>
<comment type="subcellular location">
    <subcellularLocation>
        <location evidence="1">Cytoplasm</location>
    </subcellularLocation>
</comment>
<comment type="similarity">
    <text evidence="1">Belongs to the PNP synthase family.</text>
</comment>